<sequence length="227" mass="26410">MPEINTDHLDKQQVQLLAEMCILIDENDNKIGAETKKNCHLNENIEKGLLHRAFSVFLFNTENKLLLQQRSDAKITFPGCFTNTCCSHPLSNPGELEENDALGVRRAAQRRLKAELGIPLEEVPPEEINYLTRIHYKAQSDGIWGEHEIDYILFVRKNVTLNPDPNEIKSFCYVSKEELKELLKKAANGEIKITPWFQIIAETFLFKWWDNLNHLNQFVDHEKIHRM</sequence>
<comment type="function">
    <text evidence="3">Catalyzes the 1,3-allylic rearrangement of the homoallylic substrate isopentenyl (IPP) to its highly electrophilic allylic isomer, dimethylallyl diphosphate (DMAPP).</text>
</comment>
<comment type="catalytic activity">
    <reaction evidence="3">
        <text>isopentenyl diphosphate = dimethylallyl diphosphate</text>
        <dbReference type="Rhea" id="RHEA:23284"/>
        <dbReference type="ChEBI" id="CHEBI:57623"/>
        <dbReference type="ChEBI" id="CHEBI:128769"/>
        <dbReference type="EC" id="5.3.3.2"/>
    </reaction>
</comment>
<comment type="cofactor">
    <cofactor evidence="3">
        <name>Mg(2+)</name>
        <dbReference type="ChEBI" id="CHEBI:18420"/>
    </cofactor>
    <text evidence="3">Binds 1 Mg(2+) ion per subunit.</text>
</comment>
<comment type="pathway">
    <text evidence="3">Isoprenoid biosynthesis; dimethylallyl diphosphate biosynthesis; dimethylallyl diphosphate from isopentenyl diphosphate: step 1/1.</text>
</comment>
<comment type="subunit">
    <text evidence="3">Monomer.</text>
</comment>
<comment type="subcellular location">
    <subcellularLocation>
        <location evidence="2">Peroxisome</location>
    </subcellularLocation>
</comment>
<comment type="similarity">
    <text evidence="5">Belongs to the IPP isomerase type 1 family.</text>
</comment>
<comment type="sequence caution" evidence="5">
    <conflict type="erroneous initiation">
        <sequence resource="EMBL-CDS" id="BAE01860"/>
    </conflict>
</comment>
<dbReference type="EC" id="5.3.3.2" evidence="3"/>
<dbReference type="EMBL" id="AB169779">
    <property type="protein sequence ID" value="BAE01860.1"/>
    <property type="status" value="ALT_INIT"/>
    <property type="molecule type" value="mRNA"/>
</dbReference>
<dbReference type="SMR" id="Q4R4W5"/>
<dbReference type="STRING" id="9541.ENSMFAP00000012880"/>
<dbReference type="eggNOG" id="KOG0142">
    <property type="taxonomic scope" value="Eukaryota"/>
</dbReference>
<dbReference type="UniPathway" id="UPA00059">
    <property type="reaction ID" value="UER00104"/>
</dbReference>
<dbReference type="Proteomes" id="UP000233100">
    <property type="component" value="Unplaced"/>
</dbReference>
<dbReference type="GO" id="GO:0005777">
    <property type="term" value="C:peroxisome"/>
    <property type="evidence" value="ECO:0007669"/>
    <property type="project" value="UniProtKB-SubCell"/>
</dbReference>
<dbReference type="GO" id="GO:0004452">
    <property type="term" value="F:isopentenyl-diphosphate delta-isomerase activity"/>
    <property type="evidence" value="ECO:0007669"/>
    <property type="project" value="UniProtKB-EC"/>
</dbReference>
<dbReference type="GO" id="GO:0046872">
    <property type="term" value="F:metal ion binding"/>
    <property type="evidence" value="ECO:0007669"/>
    <property type="project" value="UniProtKB-KW"/>
</dbReference>
<dbReference type="GO" id="GO:0006695">
    <property type="term" value="P:cholesterol biosynthetic process"/>
    <property type="evidence" value="ECO:0007669"/>
    <property type="project" value="UniProtKB-KW"/>
</dbReference>
<dbReference type="GO" id="GO:0050992">
    <property type="term" value="P:dimethylallyl diphosphate biosynthetic process"/>
    <property type="evidence" value="ECO:0007669"/>
    <property type="project" value="UniProtKB-UniPathway"/>
</dbReference>
<dbReference type="GO" id="GO:0009240">
    <property type="term" value="P:isopentenyl diphosphate biosynthetic process"/>
    <property type="evidence" value="ECO:0007669"/>
    <property type="project" value="TreeGrafter"/>
</dbReference>
<dbReference type="CDD" id="cd02885">
    <property type="entry name" value="NUDIX_IPP_Isomerase"/>
    <property type="match status" value="1"/>
</dbReference>
<dbReference type="FunFam" id="3.90.79.10:FF:000012">
    <property type="entry name" value="Isopentenyl-diphosphate Delta-isomerase 1"/>
    <property type="match status" value="1"/>
</dbReference>
<dbReference type="Gene3D" id="3.90.79.10">
    <property type="entry name" value="Nucleoside Triphosphate Pyrophosphohydrolase"/>
    <property type="match status" value="1"/>
</dbReference>
<dbReference type="InterPro" id="IPR011876">
    <property type="entry name" value="IsopentenylPP_isomerase_typ1"/>
</dbReference>
<dbReference type="InterPro" id="IPR015797">
    <property type="entry name" value="NUDIX_hydrolase-like_dom_sf"/>
</dbReference>
<dbReference type="InterPro" id="IPR000086">
    <property type="entry name" value="NUDIX_hydrolase_dom"/>
</dbReference>
<dbReference type="NCBIfam" id="TIGR02150">
    <property type="entry name" value="IPP_isom_1"/>
    <property type="match status" value="1"/>
</dbReference>
<dbReference type="PANTHER" id="PTHR10885">
    <property type="entry name" value="ISOPENTENYL-DIPHOSPHATE DELTA-ISOMERASE"/>
    <property type="match status" value="1"/>
</dbReference>
<dbReference type="PANTHER" id="PTHR10885:SF5">
    <property type="entry name" value="ISOPENTENYL-DIPHOSPHATE DELTA-ISOMERASE 1"/>
    <property type="match status" value="1"/>
</dbReference>
<dbReference type="Pfam" id="PF00293">
    <property type="entry name" value="NUDIX"/>
    <property type="match status" value="1"/>
</dbReference>
<dbReference type="PIRSF" id="PIRSF018427">
    <property type="entry name" value="Isopntndiph_ism"/>
    <property type="match status" value="1"/>
</dbReference>
<dbReference type="SUPFAM" id="SSF55811">
    <property type="entry name" value="Nudix"/>
    <property type="match status" value="1"/>
</dbReference>
<dbReference type="PROSITE" id="PS51462">
    <property type="entry name" value="NUDIX"/>
    <property type="match status" value="1"/>
</dbReference>
<organism>
    <name type="scientific">Macaca fascicularis</name>
    <name type="common">Crab-eating macaque</name>
    <name type="synonym">Cynomolgus monkey</name>
    <dbReference type="NCBI Taxonomy" id="9541"/>
    <lineage>
        <taxon>Eukaryota</taxon>
        <taxon>Metazoa</taxon>
        <taxon>Chordata</taxon>
        <taxon>Craniata</taxon>
        <taxon>Vertebrata</taxon>
        <taxon>Euteleostomi</taxon>
        <taxon>Mammalia</taxon>
        <taxon>Eutheria</taxon>
        <taxon>Euarchontoglires</taxon>
        <taxon>Primates</taxon>
        <taxon>Haplorrhini</taxon>
        <taxon>Catarrhini</taxon>
        <taxon>Cercopithecidae</taxon>
        <taxon>Cercopithecinae</taxon>
        <taxon>Macaca</taxon>
    </lineage>
</organism>
<name>IDI1_MACFA</name>
<feature type="chain" id="PRO_0000205223" description="Isopentenyl-diphosphate Delta-isomerase 1">
    <location>
        <begin position="1"/>
        <end position="227"/>
    </location>
</feature>
<feature type="domain" description="Nudix hydrolase" evidence="4">
    <location>
        <begin position="49"/>
        <end position="199"/>
    </location>
</feature>
<feature type="short sequence motif" description="Microbody targeting signal">
    <location>
        <begin position="225"/>
        <end position="227"/>
    </location>
</feature>
<feature type="active site">
    <location>
        <position position="86"/>
    </location>
</feature>
<feature type="active site">
    <location>
        <position position="148"/>
    </location>
</feature>
<feature type="binding site" evidence="1">
    <location>
        <position position="36"/>
    </location>
    <ligand>
        <name>substrate</name>
    </ligand>
</feature>
<feature type="binding site" evidence="1">
    <location>
        <position position="40"/>
    </location>
    <ligand>
        <name>Mg(2+)</name>
        <dbReference type="ChEBI" id="CHEBI:18420"/>
    </ligand>
</feature>
<feature type="binding site" evidence="1">
    <location>
        <position position="51"/>
    </location>
    <ligand>
        <name>Mg(2+)</name>
        <dbReference type="ChEBI" id="CHEBI:18420"/>
    </ligand>
</feature>
<feature type="binding site" evidence="1">
    <location>
        <position position="70"/>
    </location>
    <ligand>
        <name>substrate</name>
    </ligand>
</feature>
<feature type="binding site" evidence="1">
    <location>
        <position position="74"/>
    </location>
    <ligand>
        <name>substrate</name>
    </ligand>
</feature>
<feature type="binding site" evidence="1">
    <location>
        <position position="87"/>
    </location>
    <ligand>
        <name>substrate</name>
    </ligand>
</feature>
<feature type="binding site" evidence="1">
    <location>
        <position position="146"/>
    </location>
    <ligand>
        <name>Mg(2+)</name>
        <dbReference type="ChEBI" id="CHEBI:18420"/>
    </ligand>
</feature>
<feature type="binding site" evidence="1">
    <location>
        <position position="148"/>
    </location>
    <ligand>
        <name>Mg(2+)</name>
        <dbReference type="ChEBI" id="CHEBI:18420"/>
    </ligand>
</feature>
<feature type="modified residue" description="N6-acetyllysine" evidence="3">
    <location>
        <position position="176"/>
    </location>
</feature>
<proteinExistence type="evidence at transcript level"/>
<accession>Q4R4W5</accession>
<gene>
    <name type="primary">IDI1</name>
    <name type="ORF">QtrA-12624</name>
</gene>
<protein>
    <recommendedName>
        <fullName>Isopentenyl-diphosphate Delta-isomerase 1</fullName>
        <ecNumber evidence="3">5.3.3.2</ecNumber>
    </recommendedName>
    <alternativeName>
        <fullName>Isopentenyl pyrophosphate isomerase 1</fullName>
        <shortName>IPP isomerase 1</shortName>
        <shortName>IPPI1</shortName>
    </alternativeName>
</protein>
<evidence type="ECO:0000250" key="1"/>
<evidence type="ECO:0000250" key="2">
    <source>
        <dbReference type="UniProtKB" id="O35586"/>
    </source>
</evidence>
<evidence type="ECO:0000250" key="3">
    <source>
        <dbReference type="UniProtKB" id="Q13907"/>
    </source>
</evidence>
<evidence type="ECO:0000255" key="4">
    <source>
        <dbReference type="PROSITE-ProRule" id="PRU00794"/>
    </source>
</evidence>
<evidence type="ECO:0000305" key="5"/>
<reference key="1">
    <citation type="submission" date="2005-06" db="EMBL/GenBank/DDBJ databases">
        <title>DNA sequences of macaque genes expressed in brain or testis and its evolutionary implications.</title>
        <authorList>
            <consortium name="International consortium for macaque cDNA sequencing and analysis"/>
        </authorList>
    </citation>
    <scope>NUCLEOTIDE SEQUENCE [LARGE SCALE MRNA]</scope>
    <source>
        <tissue>Temporal cortex</tissue>
    </source>
</reference>
<keyword id="KW-0007">Acetylation</keyword>
<keyword id="KW-0152">Cholesterol biosynthesis</keyword>
<keyword id="KW-0153">Cholesterol metabolism</keyword>
<keyword id="KW-0413">Isomerase</keyword>
<keyword id="KW-0414">Isoprene biosynthesis</keyword>
<keyword id="KW-0444">Lipid biosynthesis</keyword>
<keyword id="KW-0443">Lipid metabolism</keyword>
<keyword id="KW-0460">Magnesium</keyword>
<keyword id="KW-0479">Metal-binding</keyword>
<keyword id="KW-0576">Peroxisome</keyword>
<keyword id="KW-1185">Reference proteome</keyword>
<keyword id="KW-0752">Steroid biosynthesis</keyword>
<keyword id="KW-0753">Steroid metabolism</keyword>
<keyword id="KW-0756">Sterol biosynthesis</keyword>
<keyword id="KW-1207">Sterol metabolism</keyword>